<protein>
    <recommendedName>
        <fullName evidence="6">Peroxisomal ATPase PEX1</fullName>
        <ecNumber evidence="1">3.6.4.-</ecNumber>
    </recommendedName>
    <alternativeName>
        <fullName evidence="6">Peroxin-1</fullName>
    </alternativeName>
    <alternativeName>
        <fullName evidence="5">Peroxisome biosynthesis protein PAS1</fullName>
    </alternativeName>
</protein>
<comment type="function">
    <text evidence="1 3 4">Component of the PEX1-PEX6 AAA ATPase complex involved in peroxisome biosynthesis (PubMed:7962088, PubMed:9447990). The complex acts as a protein dislocase complex that mediates the ATP-dependent extraction of the PEX5 receptor from peroxisomal membranes, an essential step for PEX5 recycling. Specifically recognizes PEX5 monoubiquitinated at 'Cys-6', and pulls it out of the peroxisome lumen through the PEX2-PEX10-PEX12 retrotranslocation channel. Extraction by the PEX1-PEX6 AAA ATPase complex is accompanied by unfolding of the TPR repeats and release of bound cargo from PEX5 (By similarity).</text>
</comment>
<comment type="catalytic activity">
    <reaction evidence="1">
        <text>ATP + H2O = ADP + phosphate + H(+)</text>
        <dbReference type="Rhea" id="RHEA:13065"/>
        <dbReference type="ChEBI" id="CHEBI:15377"/>
        <dbReference type="ChEBI" id="CHEBI:15378"/>
        <dbReference type="ChEBI" id="CHEBI:30616"/>
        <dbReference type="ChEBI" id="CHEBI:43474"/>
        <dbReference type="ChEBI" id="CHEBI:456216"/>
    </reaction>
    <physiologicalReaction direction="left-to-right" evidence="1">
        <dbReference type="Rhea" id="RHEA:13066"/>
    </physiologicalReaction>
</comment>
<comment type="subunit">
    <text evidence="4">Interacts with PEX6; forming the PEX1-PEX6 AAA ATPase complex, which is composed of a heterohexamer formed by a trimer of PEX1-PEX6 dimers.</text>
</comment>
<comment type="subcellular location">
    <subcellularLocation>
        <location evidence="4">Membrane</location>
        <topology evidence="4">Peripheral membrane protein</topology>
    </subcellularLocation>
    <text evidence="4">Associated with membranous subcellular structures distinct from mature peroxisomes.</text>
</comment>
<comment type="similarity">
    <text evidence="7">Belongs to the AAA ATPase family.</text>
</comment>
<evidence type="ECO:0000250" key="1">
    <source>
        <dbReference type="UniProtKB" id="P24004"/>
    </source>
</evidence>
<evidence type="ECO:0000256" key="2">
    <source>
        <dbReference type="SAM" id="MobiDB-lite"/>
    </source>
</evidence>
<evidence type="ECO:0000269" key="3">
    <source>
    </source>
</evidence>
<evidence type="ECO:0000269" key="4">
    <source>
    </source>
</evidence>
<evidence type="ECO:0000303" key="5">
    <source>
    </source>
</evidence>
<evidence type="ECO:0000303" key="6">
    <source>
    </source>
</evidence>
<evidence type="ECO:0000305" key="7"/>
<name>PEX1_PICPA</name>
<proteinExistence type="evidence at protein level"/>
<feature type="chain" id="PRO_0000084605" description="Peroxisomal ATPase PEX1">
    <location>
        <begin position="1"/>
        <end position="1157"/>
    </location>
</feature>
<feature type="region of interest" description="Disordered" evidence="2">
    <location>
        <begin position="187"/>
        <end position="221"/>
    </location>
</feature>
<feature type="region of interest" description="Disordered" evidence="2">
    <location>
        <begin position="1135"/>
        <end position="1157"/>
    </location>
</feature>
<feature type="compositionally biased region" description="Low complexity" evidence="2">
    <location>
        <begin position="205"/>
        <end position="217"/>
    </location>
</feature>
<keyword id="KW-0067">ATP-binding</keyword>
<keyword id="KW-0378">Hydrolase</keyword>
<keyword id="KW-0472">Membrane</keyword>
<keyword id="KW-0547">Nucleotide-binding</keyword>
<keyword id="KW-0962">Peroxisome biogenesis</keyword>
<keyword id="KW-0653">Protein transport</keyword>
<keyword id="KW-0813">Transport</keyword>
<organism>
    <name type="scientific">Komagataella pastoris</name>
    <name type="common">Yeast</name>
    <name type="synonym">Pichia pastoris</name>
    <dbReference type="NCBI Taxonomy" id="4922"/>
    <lineage>
        <taxon>Eukaryota</taxon>
        <taxon>Fungi</taxon>
        <taxon>Dikarya</taxon>
        <taxon>Ascomycota</taxon>
        <taxon>Saccharomycotina</taxon>
        <taxon>Pichiomycetes</taxon>
        <taxon>Pichiales</taxon>
        <taxon>Pichiaceae</taxon>
        <taxon>Komagataella</taxon>
    </lineage>
</organism>
<gene>
    <name evidence="6" type="primary">PEX1</name>
    <name evidence="5" type="synonym">PAS1</name>
</gene>
<dbReference type="EC" id="3.6.4.-" evidence="1"/>
<dbReference type="EMBL" id="Z36987">
    <property type="protein sequence ID" value="CAA85450.1"/>
    <property type="molecule type" value="Genomic_DNA"/>
</dbReference>
<dbReference type="PIR" id="A55152">
    <property type="entry name" value="A55152"/>
</dbReference>
<dbReference type="SMR" id="P46463"/>
<dbReference type="GO" id="GO:0005829">
    <property type="term" value="C:cytosol"/>
    <property type="evidence" value="ECO:0007669"/>
    <property type="project" value="TreeGrafter"/>
</dbReference>
<dbReference type="GO" id="GO:0005778">
    <property type="term" value="C:peroxisomal membrane"/>
    <property type="evidence" value="ECO:0007669"/>
    <property type="project" value="TreeGrafter"/>
</dbReference>
<dbReference type="GO" id="GO:0005524">
    <property type="term" value="F:ATP binding"/>
    <property type="evidence" value="ECO:0007669"/>
    <property type="project" value="UniProtKB-KW"/>
</dbReference>
<dbReference type="GO" id="GO:0016887">
    <property type="term" value="F:ATP hydrolysis activity"/>
    <property type="evidence" value="ECO:0007669"/>
    <property type="project" value="InterPro"/>
</dbReference>
<dbReference type="GO" id="GO:0016558">
    <property type="term" value="P:protein import into peroxisome matrix"/>
    <property type="evidence" value="ECO:0007669"/>
    <property type="project" value="TreeGrafter"/>
</dbReference>
<dbReference type="CDD" id="cd19526">
    <property type="entry name" value="RecA-like_PEX1_r2"/>
    <property type="match status" value="1"/>
</dbReference>
<dbReference type="FunFam" id="3.40.50.300:FF:000149">
    <property type="entry name" value="Nuclear valosin-containing protein-like"/>
    <property type="match status" value="1"/>
</dbReference>
<dbReference type="Gene3D" id="1.10.8.60">
    <property type="match status" value="2"/>
</dbReference>
<dbReference type="Gene3D" id="3.10.330.10">
    <property type="match status" value="1"/>
</dbReference>
<dbReference type="Gene3D" id="3.40.50.300">
    <property type="entry name" value="P-loop containing nucleotide triphosphate hydrolases"/>
    <property type="match status" value="2"/>
</dbReference>
<dbReference type="InterPro" id="IPR003593">
    <property type="entry name" value="AAA+_ATPase"/>
</dbReference>
<dbReference type="InterPro" id="IPR050168">
    <property type="entry name" value="AAA_ATPase_domain"/>
</dbReference>
<dbReference type="InterPro" id="IPR041569">
    <property type="entry name" value="AAA_lid_3"/>
</dbReference>
<dbReference type="InterPro" id="IPR009010">
    <property type="entry name" value="Asp_de-COase-like_dom_sf"/>
</dbReference>
<dbReference type="InterPro" id="IPR003959">
    <property type="entry name" value="ATPase_AAA_core"/>
</dbReference>
<dbReference type="InterPro" id="IPR003960">
    <property type="entry name" value="ATPase_AAA_CS"/>
</dbReference>
<dbReference type="InterPro" id="IPR029067">
    <property type="entry name" value="CDC48_domain_2-like_sf"/>
</dbReference>
<dbReference type="InterPro" id="IPR027417">
    <property type="entry name" value="P-loop_NTPase"/>
</dbReference>
<dbReference type="InterPro" id="IPR015342">
    <property type="entry name" value="PEX1-N_C-lobe"/>
</dbReference>
<dbReference type="PANTHER" id="PTHR23077">
    <property type="entry name" value="AAA-FAMILY ATPASE"/>
    <property type="match status" value="1"/>
</dbReference>
<dbReference type="PANTHER" id="PTHR23077:SF12">
    <property type="entry name" value="PEROXISOMAL ATPASE PEX1"/>
    <property type="match status" value="1"/>
</dbReference>
<dbReference type="Pfam" id="PF00004">
    <property type="entry name" value="AAA"/>
    <property type="match status" value="2"/>
</dbReference>
<dbReference type="Pfam" id="PF17862">
    <property type="entry name" value="AAA_lid_3"/>
    <property type="match status" value="1"/>
</dbReference>
<dbReference type="Pfam" id="PF09262">
    <property type="entry name" value="PEX-1N"/>
    <property type="match status" value="1"/>
</dbReference>
<dbReference type="SMART" id="SM00382">
    <property type="entry name" value="AAA"/>
    <property type="match status" value="2"/>
</dbReference>
<dbReference type="SUPFAM" id="SSF50692">
    <property type="entry name" value="ADC-like"/>
    <property type="match status" value="1"/>
</dbReference>
<dbReference type="SUPFAM" id="SSF54585">
    <property type="entry name" value="Cdc48 domain 2-like"/>
    <property type="match status" value="1"/>
</dbReference>
<dbReference type="SUPFAM" id="SSF52540">
    <property type="entry name" value="P-loop containing nucleoside triphosphate hydrolases"/>
    <property type="match status" value="2"/>
</dbReference>
<dbReference type="PROSITE" id="PS00674">
    <property type="entry name" value="AAA"/>
    <property type="match status" value="1"/>
</dbReference>
<accession>P46463</accession>
<sequence>MNSIDAVVRYSPLRNNLCNLPSAITTMLFSADFNIQQIIVELSWVPHQRAAQRRIAYCGWAGGITKTSSSNPVIEIDRSLASAIDLQENVNVTVNVHIDAVKAITVELEPVTSNDWEIVETHAQVLETYLLNQTRCVYPNQVLVVYPTPQTTARLLVKKIEPEVSTFAQLFNDTEVQIAPKVQKRPSISSVRSDSSGHRIRRVRSSTSTATGRRSVTNNGEVLPSMLRRSITLPNNTYAHVNDSKSGGYKVYCNLNELIPALQNAHFVSVSVLVGPGTPDRTGLTSSKIKQLNDSIDQAAQTQTNAAGSSHPPESSYTETGKVIAELVHDSKSPKGNVGLSELLACSLGIENTVGNLISLEQARKPLIKKPTVLVLHKYTTVSPASLDRVTIKHATEEQKRVQNKKERDTLLTQLMQLLSPLLDSCTFTNCVKLPKIGTLLPNGGLLQFKRIKSGWTTPLGKDNVSLEIGEEILRPESFSPSYDLLPDRKTHVRTQSDQYPTAQENLIESLSKIASGGSLLFGTSGSGKSLVISQVAQIVTNKGHFVKLLNCDKIMSESYNNLRGIFEDIFSEVSWKAPSLLILEDLDSLIPAEQEHSDSSQSRQLSEYFISKLSAQTINRDITILASSKSKESLNSLIFTTHLIEHDFQLRAPDKEARKQILQSYLDTLNVFCSEGELLNNIAVETEGYLPKDLKVLCDRAYHDLISRDILADSDSELDIEESSTPILNGSVGDIANKQSEIENGISGLELTNNSSSTIAVDKHGATIQKDNFDSALSGYIPQSLRGVKLQKSDVRWDDIGGLRDAKSILLETLEWPTKYAPIFSSCPLRLRSGILLYGYPGCGKTLLASAVAAQCGLNFISIKGPEILNKYIGPSEQSVRELFERAQAAKPCILFFDEFDSIAPKRGHDSTGVTDRVVNQMLTQMDGAEGLDGVYVLAATSRPDLIDSALLRPGRLDKSVICDMPDFDDRLDILQSVTRNMNVSKSVNLSSVAGECSGFSGADLQALAYNAYLKAVHEKLTKDESMAMAGEMDDNDDKKRMVECFQFSGNTEKKSLIELKPSDRATVIKKLEHLYQGNGNHAEGETKSKLATTAANSVIITSKDFEDSLSETKQSISQSEKRKLEAIYQQFISGRDGNMPDGTASNEIGARSTLM</sequence>
<reference key="1">
    <citation type="journal article" date="1994" name="J. Cell Biol.">
        <title>Role of the PAS1 gene of Pichia pastoris in peroxisome biogenesis.</title>
        <authorList>
            <person name="Heyman J.A."/>
            <person name="Monosov E."/>
            <person name="Subramani S."/>
        </authorList>
    </citation>
    <scope>NUCLEOTIDE SEQUENCE [GENOMIC DNA]</scope>
    <scope>FUNCTION</scope>
    <source>
        <strain>21-1</strain>
    </source>
</reference>
<reference key="2">
    <citation type="journal article" date="1998" name="Mol. Cell. Biol.">
        <title>Two AAA family peroxins, PpPex1p and PpPex6p, interact with each other in an ATP-dependent manner and are associated with different subcellular membranous structures distinct from peroxisomes.</title>
        <authorList>
            <person name="Faber K.N."/>
            <person name="Heyman J.A."/>
            <person name="Subramani S."/>
        </authorList>
    </citation>
    <scope>FUNCTION</scope>
    <scope>INTERACTION WITH PEX6</scope>
    <scope>SUBCELLULAR LOCATION</scope>
</reference>